<comment type="function">
    <text evidence="1 7">Involved in the targeting and/or fusion of transport vesicles to their target membrane during transport of proteins from the early endosome to the lysosome. Required for heterotypic fusion of late endosomes with lysosomes and homotypic lysosomal fusion. Required for calcium regulated lysosomal exocytosis.</text>
</comment>
<comment type="subunit">
    <text evidence="7">Component of the SNARE complex composed of syn7A, syn8A, vamp7A and vti1A.</text>
</comment>
<comment type="interaction">
    <interactant intactId="EBI-1810311">
        <id>Q54NW7</id>
    </interactant>
    <interactant intactId="EBI-1810238">
        <id>Q54JY7</id>
        <label>syn7A</label>
    </interactant>
    <organismsDiffer>false</organismsDiffer>
    <experiments>6</experiments>
</comment>
<comment type="subcellular location">
    <subcellularLocation>
        <location evidence="7">Cytoplasmic vesicle</location>
        <location evidence="7">Secretory vesicle membrane</location>
        <topology evidence="7">Single-pass type IV membrane protein</topology>
    </subcellularLocation>
    <subcellularLocation>
        <location evidence="2 3 4">Golgi apparatus</location>
        <location evidence="2 3 4">trans-Golgi network membrane</location>
        <topology evidence="2 3 4">Single-pass type IV membrane protein</topology>
    </subcellularLocation>
    <subcellularLocation>
        <location evidence="7">Late endosome membrane</location>
        <topology evidence="7">Single-pass type IV membrane protein</topology>
    </subcellularLocation>
    <subcellularLocation>
        <location evidence="7">Lysosome membrane</location>
        <topology evidence="7">Single-pass type IV membrane protein</topology>
    </subcellularLocation>
    <subcellularLocation>
        <location evidence="2 3 4">Endoplasmic reticulum membrane</location>
        <topology evidence="2 3 4">Single-pass type IV membrane protein</topology>
    </subcellularLocation>
    <subcellularLocation>
        <location evidence="2 3 4">Cytoplasmic vesicle</location>
        <location evidence="2 3 4">Phagosome membrane</location>
        <topology evidence="2 3 4">Single-pass type IV membrane protein</topology>
    </subcellularLocation>
    <text evidence="2 3 4 7">During macropinocytosis highest levels are found in endosomes with lower levels observed in the lysosomes.</text>
</comment>
<comment type="similarity">
    <text evidence="8">Belongs to the synaptobrevin family.</text>
</comment>
<gene>
    <name evidence="9" type="primary">vamp7A</name>
    <name type="synonym">vamp7</name>
    <name type="ORF">DDB_G0284951</name>
</gene>
<accession>Q54NW7</accession>
<evidence type="ECO:0000250" key="1">
    <source>
        <dbReference type="UniProtKB" id="P51809"/>
    </source>
</evidence>
<evidence type="ECO:0000250" key="2">
    <source>
        <dbReference type="UniProtKB" id="P70280"/>
    </source>
</evidence>
<evidence type="ECO:0000250" key="3">
    <source>
        <dbReference type="UniProtKB" id="Q9JHW5"/>
    </source>
</evidence>
<evidence type="ECO:0000255" key="4"/>
<evidence type="ECO:0000255" key="5">
    <source>
        <dbReference type="PROSITE-ProRule" id="PRU00231"/>
    </source>
</evidence>
<evidence type="ECO:0000255" key="6">
    <source>
        <dbReference type="PROSITE-ProRule" id="PRU00290"/>
    </source>
</evidence>
<evidence type="ECO:0000269" key="7">
    <source>
    </source>
</evidence>
<evidence type="ECO:0000305" key="8"/>
<evidence type="ECO:0000312" key="9">
    <source>
        <dbReference type="EMBL" id="EAL64939.1"/>
    </source>
</evidence>
<dbReference type="EMBL" id="AAFI02000073">
    <property type="protein sequence ID" value="EAL64939.1"/>
    <property type="molecule type" value="Genomic_DNA"/>
</dbReference>
<dbReference type="RefSeq" id="XP_639950.1">
    <property type="nucleotide sequence ID" value="XM_634858.1"/>
</dbReference>
<dbReference type="SMR" id="Q54NW7"/>
<dbReference type="FunCoup" id="Q54NW7">
    <property type="interactions" value="30"/>
</dbReference>
<dbReference type="IntAct" id="Q54NW7">
    <property type="interactions" value="1"/>
</dbReference>
<dbReference type="STRING" id="44689.Q54NW7"/>
<dbReference type="PaxDb" id="44689-DDB0231535"/>
<dbReference type="EnsemblProtists" id="EAL64939">
    <property type="protein sequence ID" value="EAL64939"/>
    <property type="gene ID" value="DDB_G0284951"/>
</dbReference>
<dbReference type="GeneID" id="8624862"/>
<dbReference type="KEGG" id="ddi:DDB_G0284951"/>
<dbReference type="dictyBase" id="DDB_G0284951">
    <property type="gene designation" value="vamp7A"/>
</dbReference>
<dbReference type="VEuPathDB" id="AmoebaDB:DDB_G0284951"/>
<dbReference type="eggNOG" id="KOG0859">
    <property type="taxonomic scope" value="Eukaryota"/>
</dbReference>
<dbReference type="HOGENOM" id="CLU_064620_1_1_1"/>
<dbReference type="InParanoid" id="Q54NW7"/>
<dbReference type="OMA" id="HYENRIV"/>
<dbReference type="PhylomeDB" id="Q54NW7"/>
<dbReference type="Reactome" id="R-DDI-199992">
    <property type="pathway name" value="trans-Golgi Network Vesicle Budding"/>
</dbReference>
<dbReference type="PRO" id="PR:Q54NW7"/>
<dbReference type="Proteomes" id="UP000002195">
    <property type="component" value="Chromosome 4"/>
</dbReference>
<dbReference type="GO" id="GO:0030666">
    <property type="term" value="C:endocytic vesicle membrane"/>
    <property type="evidence" value="ECO:0000314"/>
    <property type="project" value="dictyBase"/>
</dbReference>
<dbReference type="GO" id="GO:0005789">
    <property type="term" value="C:endoplasmic reticulum membrane"/>
    <property type="evidence" value="ECO:0000250"/>
    <property type="project" value="UniProtKB"/>
</dbReference>
<dbReference type="GO" id="GO:0005768">
    <property type="term" value="C:endosome"/>
    <property type="evidence" value="ECO:0000314"/>
    <property type="project" value="dictyBase"/>
</dbReference>
<dbReference type="GO" id="GO:0005794">
    <property type="term" value="C:Golgi apparatus"/>
    <property type="evidence" value="ECO:0007669"/>
    <property type="project" value="UniProtKB-SubCell"/>
</dbReference>
<dbReference type="GO" id="GO:0031902">
    <property type="term" value="C:late endosome membrane"/>
    <property type="evidence" value="ECO:0000314"/>
    <property type="project" value="UniProtKB"/>
</dbReference>
<dbReference type="GO" id="GO:0005765">
    <property type="term" value="C:lysosomal membrane"/>
    <property type="evidence" value="ECO:0000314"/>
    <property type="project" value="UniProtKB"/>
</dbReference>
<dbReference type="GO" id="GO:0045335">
    <property type="term" value="C:phagocytic vesicle"/>
    <property type="evidence" value="ECO:0000314"/>
    <property type="project" value="dictyBase"/>
</dbReference>
<dbReference type="GO" id="GO:0030670">
    <property type="term" value="C:phagocytic vesicle membrane"/>
    <property type="evidence" value="ECO:0007669"/>
    <property type="project" value="UniProtKB-SubCell"/>
</dbReference>
<dbReference type="GO" id="GO:0031201">
    <property type="term" value="C:SNARE complex"/>
    <property type="evidence" value="ECO:0000314"/>
    <property type="project" value="UniProtKB"/>
</dbReference>
<dbReference type="GO" id="GO:0030658">
    <property type="term" value="C:transport vesicle membrane"/>
    <property type="evidence" value="ECO:0007669"/>
    <property type="project" value="UniProtKB-SubCell"/>
</dbReference>
<dbReference type="GO" id="GO:0008333">
    <property type="term" value="P:endosome to lysosome transport"/>
    <property type="evidence" value="ECO:0000270"/>
    <property type="project" value="UniProtKB"/>
</dbReference>
<dbReference type="GO" id="GO:0015031">
    <property type="term" value="P:protein transport"/>
    <property type="evidence" value="ECO:0007669"/>
    <property type="project" value="UniProtKB-KW"/>
</dbReference>
<dbReference type="GO" id="GO:0006906">
    <property type="term" value="P:vesicle fusion"/>
    <property type="evidence" value="ECO:0000314"/>
    <property type="project" value="UniProtKB"/>
</dbReference>
<dbReference type="GO" id="GO:0016192">
    <property type="term" value="P:vesicle-mediated transport"/>
    <property type="evidence" value="ECO:0000250"/>
    <property type="project" value="UniProtKB"/>
</dbReference>
<dbReference type="CDD" id="cd14824">
    <property type="entry name" value="Longin"/>
    <property type="match status" value="1"/>
</dbReference>
<dbReference type="CDD" id="cd15843">
    <property type="entry name" value="R-SNARE"/>
    <property type="match status" value="1"/>
</dbReference>
<dbReference type="FunFam" id="3.30.450.50:FF:000015">
    <property type="entry name" value="Synaptobrevin 2 isoform 1"/>
    <property type="match status" value="1"/>
</dbReference>
<dbReference type="FunFam" id="1.20.5.110:FF:000004">
    <property type="entry name" value="Vesicle-associated membrane protein 7"/>
    <property type="match status" value="1"/>
</dbReference>
<dbReference type="Gene3D" id="1.20.5.110">
    <property type="match status" value="1"/>
</dbReference>
<dbReference type="Gene3D" id="3.30.450.50">
    <property type="entry name" value="Longin domain"/>
    <property type="match status" value="1"/>
</dbReference>
<dbReference type="InterPro" id="IPR011012">
    <property type="entry name" value="Longin-like_dom_sf"/>
</dbReference>
<dbReference type="InterPro" id="IPR010908">
    <property type="entry name" value="Longin_dom"/>
</dbReference>
<dbReference type="InterPro" id="IPR001388">
    <property type="entry name" value="Synaptobrevin-like"/>
</dbReference>
<dbReference type="InterPro" id="IPR051097">
    <property type="entry name" value="Synaptobrevin-like_transport"/>
</dbReference>
<dbReference type="InterPro" id="IPR042855">
    <property type="entry name" value="V_SNARE_CC"/>
</dbReference>
<dbReference type="PANTHER" id="PTHR21136">
    <property type="entry name" value="SNARE PROTEINS"/>
    <property type="match status" value="1"/>
</dbReference>
<dbReference type="PANTHER" id="PTHR21136:SF114">
    <property type="entry name" value="VESICLE-ASSOCIATED MEMBRANE PROTEIN 7A"/>
    <property type="match status" value="1"/>
</dbReference>
<dbReference type="Pfam" id="PF13774">
    <property type="entry name" value="Longin"/>
    <property type="match status" value="1"/>
</dbReference>
<dbReference type="Pfam" id="PF00957">
    <property type="entry name" value="Synaptobrevin"/>
    <property type="match status" value="1"/>
</dbReference>
<dbReference type="PRINTS" id="PR00219">
    <property type="entry name" value="SYNAPTOBREVN"/>
</dbReference>
<dbReference type="SMART" id="SM01270">
    <property type="entry name" value="Longin"/>
    <property type="match status" value="1"/>
</dbReference>
<dbReference type="SUPFAM" id="SSF58038">
    <property type="entry name" value="SNARE fusion complex"/>
    <property type="match status" value="1"/>
</dbReference>
<dbReference type="SUPFAM" id="SSF64356">
    <property type="entry name" value="SNARE-like"/>
    <property type="match status" value="1"/>
</dbReference>
<dbReference type="PROSITE" id="PS50859">
    <property type="entry name" value="LONGIN"/>
    <property type="match status" value="1"/>
</dbReference>
<dbReference type="PROSITE" id="PS50892">
    <property type="entry name" value="V_SNARE"/>
    <property type="match status" value="1"/>
</dbReference>
<protein>
    <recommendedName>
        <fullName>Vesicle-associated membrane protein 7A</fullName>
    </recommendedName>
</protein>
<reference evidence="9" key="1">
    <citation type="journal article" date="2005" name="Nature">
        <title>The genome of the social amoeba Dictyostelium discoideum.</title>
        <authorList>
            <person name="Eichinger L."/>
            <person name="Pachebat J.A."/>
            <person name="Gloeckner G."/>
            <person name="Rajandream M.A."/>
            <person name="Sucgang R."/>
            <person name="Berriman M."/>
            <person name="Song J."/>
            <person name="Olsen R."/>
            <person name="Szafranski K."/>
            <person name="Xu Q."/>
            <person name="Tunggal B."/>
            <person name="Kummerfeld S."/>
            <person name="Madera M."/>
            <person name="Konfortov B.A."/>
            <person name="Rivero F."/>
            <person name="Bankier A.T."/>
            <person name="Lehmann R."/>
            <person name="Hamlin N."/>
            <person name="Davies R."/>
            <person name="Gaudet P."/>
            <person name="Fey P."/>
            <person name="Pilcher K."/>
            <person name="Chen G."/>
            <person name="Saunders D."/>
            <person name="Sodergren E.J."/>
            <person name="Davis P."/>
            <person name="Kerhornou A."/>
            <person name="Nie X."/>
            <person name="Hall N."/>
            <person name="Anjard C."/>
            <person name="Hemphill L."/>
            <person name="Bason N."/>
            <person name="Farbrother P."/>
            <person name="Desany B."/>
            <person name="Just E."/>
            <person name="Morio T."/>
            <person name="Rost R."/>
            <person name="Churcher C.M."/>
            <person name="Cooper J."/>
            <person name="Haydock S."/>
            <person name="van Driessche N."/>
            <person name="Cronin A."/>
            <person name="Goodhead I."/>
            <person name="Muzny D.M."/>
            <person name="Mourier T."/>
            <person name="Pain A."/>
            <person name="Lu M."/>
            <person name="Harper D."/>
            <person name="Lindsay R."/>
            <person name="Hauser H."/>
            <person name="James K.D."/>
            <person name="Quiles M."/>
            <person name="Madan Babu M."/>
            <person name="Saito T."/>
            <person name="Buchrieser C."/>
            <person name="Wardroper A."/>
            <person name="Felder M."/>
            <person name="Thangavelu M."/>
            <person name="Johnson D."/>
            <person name="Knights A."/>
            <person name="Loulseged H."/>
            <person name="Mungall K.L."/>
            <person name="Oliver K."/>
            <person name="Price C."/>
            <person name="Quail M.A."/>
            <person name="Urushihara H."/>
            <person name="Hernandez J."/>
            <person name="Rabbinowitsch E."/>
            <person name="Steffen D."/>
            <person name="Sanders M."/>
            <person name="Ma J."/>
            <person name="Kohara Y."/>
            <person name="Sharp S."/>
            <person name="Simmonds M.N."/>
            <person name="Spiegler S."/>
            <person name="Tivey A."/>
            <person name="Sugano S."/>
            <person name="White B."/>
            <person name="Walker D."/>
            <person name="Woodward J.R."/>
            <person name="Winckler T."/>
            <person name="Tanaka Y."/>
            <person name="Shaulsky G."/>
            <person name="Schleicher M."/>
            <person name="Weinstock G.M."/>
            <person name="Rosenthal A."/>
            <person name="Cox E.C."/>
            <person name="Chisholm R.L."/>
            <person name="Gibbs R.A."/>
            <person name="Loomis W.F."/>
            <person name="Platzer M."/>
            <person name="Kay R.R."/>
            <person name="Williams J.G."/>
            <person name="Dear P.H."/>
            <person name="Noegel A.A."/>
            <person name="Barrell B.G."/>
            <person name="Kuspa A."/>
        </authorList>
    </citation>
    <scope>NUCLEOTIDE SEQUENCE [LARGE SCALE GENOMIC DNA]</scope>
    <source>
        <strain>AX4</strain>
    </source>
</reference>
<reference evidence="8" key="2">
    <citation type="journal article" date="2002" name="Biochem. J.">
        <title>Syntaxin 7, syntaxin 8, Vti1 and VAMP7 (vesicle-associated membrane protein 7) form an active SNARE complex for early macropinocytic compartment fusion in Dictyostelium discoideum.</title>
        <authorList>
            <person name="Bogdanovic A."/>
            <person name="Bennett N."/>
            <person name="Kieffer S."/>
            <person name="Louwagie M."/>
            <person name="Morio T."/>
            <person name="Garin J."/>
            <person name="Satre M."/>
            <person name="Bruckert F."/>
        </authorList>
    </citation>
    <scope>PROTEIN SEQUENCE OF 23-33 AND 72-85</scope>
    <scope>FUNCTION</scope>
    <scope>IDENTIFICATION IN SNARE COMPLEX</scope>
    <scope>SUBCELLULAR LOCATION</scope>
</reference>
<proteinExistence type="evidence at protein level"/>
<name>VAM7A_DICDI</name>
<feature type="chain" id="PRO_0000320001" description="Vesicle-associated membrane protein 7A">
    <location>
        <begin position="1"/>
        <end position="216"/>
    </location>
</feature>
<feature type="topological domain" description="Cytoplasmic" evidence="3 4">
    <location>
        <begin position="1"/>
        <end position="189"/>
    </location>
</feature>
<feature type="transmembrane region" description="Helical; Anchor for type IV membrane protein">
    <location>
        <begin position="190"/>
        <end position="210"/>
    </location>
</feature>
<feature type="topological domain" description="Vesicular" evidence="3 4">
    <location>
        <begin position="211"/>
        <end position="216"/>
    </location>
</feature>
<feature type="domain" description="Longin" evidence="5">
    <location>
        <begin position="6"/>
        <end position="112"/>
    </location>
</feature>
<feature type="domain" description="v-SNARE coiled-coil homology" evidence="6">
    <location>
        <begin position="126"/>
        <end position="186"/>
    </location>
</feature>
<organism>
    <name type="scientific">Dictyostelium discoideum</name>
    <name type="common">Social amoeba</name>
    <dbReference type="NCBI Taxonomy" id="44689"/>
    <lineage>
        <taxon>Eukaryota</taxon>
        <taxon>Amoebozoa</taxon>
        <taxon>Evosea</taxon>
        <taxon>Eumycetozoa</taxon>
        <taxon>Dictyostelia</taxon>
        <taxon>Dictyosteliales</taxon>
        <taxon>Dictyosteliaceae</taxon>
        <taxon>Dictyostelium</taxon>
    </lineage>
</organism>
<keyword id="KW-0175">Coiled coil</keyword>
<keyword id="KW-0968">Cytoplasmic vesicle</keyword>
<keyword id="KW-0903">Direct protein sequencing</keyword>
<keyword id="KW-0256">Endoplasmic reticulum</keyword>
<keyword id="KW-0967">Endosome</keyword>
<keyword id="KW-0333">Golgi apparatus</keyword>
<keyword id="KW-0458">Lysosome</keyword>
<keyword id="KW-0472">Membrane</keyword>
<keyword id="KW-0653">Protein transport</keyword>
<keyword id="KW-1185">Reference proteome</keyword>
<keyword id="KW-0735">Signal-anchor</keyword>
<keyword id="KW-0812">Transmembrane</keyword>
<keyword id="KW-1133">Transmembrane helix</keyword>
<keyword id="KW-0813">Transport</keyword>
<sequence length="216" mass="24772">MSQTDILYACVSYKGVCLVEHKIANGNFIDLARRLITKIPPTSKKIYTSENHNFHYISENDLAFLCLCHEKLGVQIPSEFLSDIRQQFIRSYGQSFSQNSPTATYDPFIRVLEERMKYYSNPKSNKMNLVMDQVSEAKGALTDAIEKTIHRGEKIEIIVDKTERLQSESFVFKSNSVALKRKLWWQNKKLAIAIGLVVCILIAVITLALLKYFKVI</sequence>